<feature type="chain" id="PRO_0000155245" description="Thymidylate kinase">
    <location>
        <begin position="1"/>
        <end position="208"/>
    </location>
</feature>
<feature type="binding site" evidence="1">
    <location>
        <begin position="12"/>
        <end position="19"/>
    </location>
    <ligand>
        <name>ATP</name>
        <dbReference type="ChEBI" id="CHEBI:30616"/>
    </ligand>
</feature>
<comment type="function">
    <text evidence="1">Phosphorylation of dTMP to form dTDP in both de novo and salvage pathways of dTTP synthesis.</text>
</comment>
<comment type="catalytic activity">
    <reaction evidence="1">
        <text>dTMP + ATP = dTDP + ADP</text>
        <dbReference type="Rhea" id="RHEA:13517"/>
        <dbReference type="ChEBI" id="CHEBI:30616"/>
        <dbReference type="ChEBI" id="CHEBI:58369"/>
        <dbReference type="ChEBI" id="CHEBI:63528"/>
        <dbReference type="ChEBI" id="CHEBI:456216"/>
        <dbReference type="EC" id="2.7.4.9"/>
    </reaction>
</comment>
<comment type="similarity">
    <text evidence="1">Belongs to the thymidylate kinase family.</text>
</comment>
<evidence type="ECO:0000255" key="1">
    <source>
        <dbReference type="HAMAP-Rule" id="MF_00165"/>
    </source>
</evidence>
<dbReference type="EC" id="2.7.4.9" evidence="1"/>
<dbReference type="EMBL" id="BX640416">
    <property type="protein sequence ID" value="CAE42133.1"/>
    <property type="molecule type" value="Genomic_DNA"/>
</dbReference>
<dbReference type="RefSeq" id="NP_880549.1">
    <property type="nucleotide sequence ID" value="NC_002929.2"/>
</dbReference>
<dbReference type="RefSeq" id="WP_003811733.1">
    <property type="nucleotide sequence ID" value="NZ_CP039022.1"/>
</dbReference>
<dbReference type="SMR" id="Q7VXD2"/>
<dbReference type="STRING" id="257313.BP1847"/>
<dbReference type="PaxDb" id="257313-BP1847"/>
<dbReference type="GeneID" id="93203318"/>
<dbReference type="KEGG" id="bpe:BP1847"/>
<dbReference type="PATRIC" id="fig|257313.5.peg.1985"/>
<dbReference type="eggNOG" id="COG0125">
    <property type="taxonomic scope" value="Bacteria"/>
</dbReference>
<dbReference type="HOGENOM" id="CLU_049131_0_2_4"/>
<dbReference type="Proteomes" id="UP000002676">
    <property type="component" value="Chromosome"/>
</dbReference>
<dbReference type="GO" id="GO:0005829">
    <property type="term" value="C:cytosol"/>
    <property type="evidence" value="ECO:0007669"/>
    <property type="project" value="TreeGrafter"/>
</dbReference>
<dbReference type="GO" id="GO:0005524">
    <property type="term" value="F:ATP binding"/>
    <property type="evidence" value="ECO:0007669"/>
    <property type="project" value="UniProtKB-UniRule"/>
</dbReference>
<dbReference type="GO" id="GO:0004798">
    <property type="term" value="F:dTMP kinase activity"/>
    <property type="evidence" value="ECO:0007669"/>
    <property type="project" value="UniProtKB-UniRule"/>
</dbReference>
<dbReference type="GO" id="GO:0006233">
    <property type="term" value="P:dTDP biosynthetic process"/>
    <property type="evidence" value="ECO:0007669"/>
    <property type="project" value="InterPro"/>
</dbReference>
<dbReference type="GO" id="GO:0006235">
    <property type="term" value="P:dTTP biosynthetic process"/>
    <property type="evidence" value="ECO:0007669"/>
    <property type="project" value="UniProtKB-UniRule"/>
</dbReference>
<dbReference type="GO" id="GO:0006227">
    <property type="term" value="P:dUDP biosynthetic process"/>
    <property type="evidence" value="ECO:0007669"/>
    <property type="project" value="TreeGrafter"/>
</dbReference>
<dbReference type="CDD" id="cd01672">
    <property type="entry name" value="TMPK"/>
    <property type="match status" value="1"/>
</dbReference>
<dbReference type="FunFam" id="3.40.50.300:FF:000225">
    <property type="entry name" value="Thymidylate kinase"/>
    <property type="match status" value="1"/>
</dbReference>
<dbReference type="Gene3D" id="3.40.50.300">
    <property type="entry name" value="P-loop containing nucleotide triphosphate hydrolases"/>
    <property type="match status" value="1"/>
</dbReference>
<dbReference type="HAMAP" id="MF_00165">
    <property type="entry name" value="Thymidylate_kinase"/>
    <property type="match status" value="1"/>
</dbReference>
<dbReference type="InterPro" id="IPR027417">
    <property type="entry name" value="P-loop_NTPase"/>
</dbReference>
<dbReference type="InterPro" id="IPR039430">
    <property type="entry name" value="Thymidylate_kin-like_dom"/>
</dbReference>
<dbReference type="InterPro" id="IPR018094">
    <property type="entry name" value="Thymidylate_kinase"/>
</dbReference>
<dbReference type="NCBIfam" id="TIGR00041">
    <property type="entry name" value="DTMP_kinase"/>
    <property type="match status" value="1"/>
</dbReference>
<dbReference type="PANTHER" id="PTHR10344">
    <property type="entry name" value="THYMIDYLATE KINASE"/>
    <property type="match status" value="1"/>
</dbReference>
<dbReference type="PANTHER" id="PTHR10344:SF4">
    <property type="entry name" value="UMP-CMP KINASE 2, MITOCHONDRIAL"/>
    <property type="match status" value="1"/>
</dbReference>
<dbReference type="Pfam" id="PF02223">
    <property type="entry name" value="Thymidylate_kin"/>
    <property type="match status" value="1"/>
</dbReference>
<dbReference type="SUPFAM" id="SSF52540">
    <property type="entry name" value="P-loop containing nucleoside triphosphate hydrolases"/>
    <property type="match status" value="1"/>
</dbReference>
<organism>
    <name type="scientific">Bordetella pertussis (strain Tohama I / ATCC BAA-589 / NCTC 13251)</name>
    <dbReference type="NCBI Taxonomy" id="257313"/>
    <lineage>
        <taxon>Bacteria</taxon>
        <taxon>Pseudomonadati</taxon>
        <taxon>Pseudomonadota</taxon>
        <taxon>Betaproteobacteria</taxon>
        <taxon>Burkholderiales</taxon>
        <taxon>Alcaligenaceae</taxon>
        <taxon>Bordetella</taxon>
    </lineage>
</organism>
<protein>
    <recommendedName>
        <fullName evidence="1">Thymidylate kinase</fullName>
        <ecNumber evidence="1">2.7.4.9</ecNumber>
    </recommendedName>
    <alternativeName>
        <fullName evidence="1">dTMP kinase</fullName>
    </alternativeName>
</protein>
<accession>Q7VXD2</accession>
<proteinExistence type="inferred from homology"/>
<sequence length="208" mass="23354">MTPRGRFITLEGVDGAGKSTHTAWMVQALRDLGLTVLATREPGGTPVGEKLRELLLSEPMALETETLLMFAARCEHVREVIAPALARGEWVVCDRFTDASYAYQGGGRQLGAARVAALEQWVHPDLQPDRTWLFDVPLDVARARLARSRQLDRFEREEDAFFERTRAAYHERARSSDGRIRIIDSSRPLEVVRAQLDSEVRELVAQAA</sequence>
<reference key="1">
    <citation type="journal article" date="2003" name="Nat. Genet.">
        <title>Comparative analysis of the genome sequences of Bordetella pertussis, Bordetella parapertussis and Bordetella bronchiseptica.</title>
        <authorList>
            <person name="Parkhill J."/>
            <person name="Sebaihia M."/>
            <person name="Preston A."/>
            <person name="Murphy L.D."/>
            <person name="Thomson N.R."/>
            <person name="Harris D.E."/>
            <person name="Holden M.T.G."/>
            <person name="Churcher C.M."/>
            <person name="Bentley S.D."/>
            <person name="Mungall K.L."/>
            <person name="Cerdeno-Tarraga A.-M."/>
            <person name="Temple L."/>
            <person name="James K.D."/>
            <person name="Harris B."/>
            <person name="Quail M.A."/>
            <person name="Achtman M."/>
            <person name="Atkin R."/>
            <person name="Baker S."/>
            <person name="Basham D."/>
            <person name="Bason N."/>
            <person name="Cherevach I."/>
            <person name="Chillingworth T."/>
            <person name="Collins M."/>
            <person name="Cronin A."/>
            <person name="Davis P."/>
            <person name="Doggett J."/>
            <person name="Feltwell T."/>
            <person name="Goble A."/>
            <person name="Hamlin N."/>
            <person name="Hauser H."/>
            <person name="Holroyd S."/>
            <person name="Jagels K."/>
            <person name="Leather S."/>
            <person name="Moule S."/>
            <person name="Norberczak H."/>
            <person name="O'Neil S."/>
            <person name="Ormond D."/>
            <person name="Price C."/>
            <person name="Rabbinowitsch E."/>
            <person name="Rutter S."/>
            <person name="Sanders M."/>
            <person name="Saunders D."/>
            <person name="Seeger K."/>
            <person name="Sharp S."/>
            <person name="Simmonds M."/>
            <person name="Skelton J."/>
            <person name="Squares R."/>
            <person name="Squares S."/>
            <person name="Stevens K."/>
            <person name="Unwin L."/>
            <person name="Whitehead S."/>
            <person name="Barrell B.G."/>
            <person name="Maskell D.J."/>
        </authorList>
    </citation>
    <scope>NUCLEOTIDE SEQUENCE [LARGE SCALE GENOMIC DNA]</scope>
    <source>
        <strain>Tohama I / ATCC BAA-589 / NCTC 13251</strain>
    </source>
</reference>
<name>KTHY_BORPE</name>
<keyword id="KW-0067">ATP-binding</keyword>
<keyword id="KW-0418">Kinase</keyword>
<keyword id="KW-0545">Nucleotide biosynthesis</keyword>
<keyword id="KW-0547">Nucleotide-binding</keyword>
<keyword id="KW-1185">Reference proteome</keyword>
<keyword id="KW-0808">Transferase</keyword>
<gene>
    <name evidence="1" type="primary">tmk</name>
    <name type="ordered locus">BP1847</name>
</gene>